<feature type="chain" id="PRO_0000265906" description="ATP synthase epsilon chain">
    <location>
        <begin position="1"/>
        <end position="138"/>
    </location>
</feature>
<protein>
    <recommendedName>
        <fullName evidence="1">ATP synthase epsilon chain</fullName>
    </recommendedName>
    <alternativeName>
        <fullName evidence="1">ATP synthase F1 sector epsilon subunit</fullName>
    </alternativeName>
    <alternativeName>
        <fullName evidence="1">F-ATPase epsilon subunit</fullName>
    </alternativeName>
</protein>
<reference key="1">
    <citation type="journal article" date="2006" name="Proc. Natl. Acad. Sci. U.S.A.">
        <title>Molecular genetic anatomy of inter- and intraserotype variation in the human bacterial pathogen group A Streptococcus.</title>
        <authorList>
            <person name="Beres S.B."/>
            <person name="Richter E.W."/>
            <person name="Nagiec M.J."/>
            <person name="Sumby P."/>
            <person name="Porcella S.F."/>
            <person name="DeLeo F.R."/>
            <person name="Musser J.M."/>
        </authorList>
    </citation>
    <scope>NUCLEOTIDE SEQUENCE [LARGE SCALE GENOMIC DNA]</scope>
    <source>
        <strain>MGAS10750</strain>
    </source>
</reference>
<organism>
    <name type="scientific">Streptococcus pyogenes serotype M4 (strain MGAS10750)</name>
    <dbReference type="NCBI Taxonomy" id="370554"/>
    <lineage>
        <taxon>Bacteria</taxon>
        <taxon>Bacillati</taxon>
        <taxon>Bacillota</taxon>
        <taxon>Bacilli</taxon>
        <taxon>Lactobacillales</taxon>
        <taxon>Streptococcaceae</taxon>
        <taxon>Streptococcus</taxon>
    </lineage>
</organism>
<gene>
    <name evidence="1" type="primary">atpC</name>
    <name type="ordered locus">MGAS10750_Spy0666</name>
</gene>
<name>ATPE_STRPF</name>
<sequence>MTQMTVQVVTPDGIKYDHHAKCISVTTPDGEMGILPNHINLIAPLQVHEMKIRRGGEDEKVDWIAINGGIIEIKDNVVTVVADSAERDRDIDVSRAERAKLRAEREIAQAETTHNIDEVRRAKVALRRALNRINVSKK</sequence>
<comment type="function">
    <text evidence="1">Produces ATP from ADP in the presence of a proton gradient across the membrane.</text>
</comment>
<comment type="subunit">
    <text>F-type ATPases have 2 components, CF(1) - the catalytic core - and CF(0) - the membrane proton channel. CF(1) has five subunits: alpha(3), beta(3), gamma(1), delta(1), epsilon(1). CF(0) has three main subunits: a, b and c.</text>
</comment>
<comment type="subcellular location">
    <subcellularLocation>
        <location evidence="1">Cell membrane</location>
        <topology evidence="1">Peripheral membrane protein</topology>
    </subcellularLocation>
</comment>
<comment type="similarity">
    <text evidence="1">Belongs to the ATPase epsilon chain family.</text>
</comment>
<evidence type="ECO:0000255" key="1">
    <source>
        <dbReference type="HAMAP-Rule" id="MF_00530"/>
    </source>
</evidence>
<proteinExistence type="inferred from homology"/>
<dbReference type="EMBL" id="CP000262">
    <property type="protein sequence ID" value="ABF37616.1"/>
    <property type="molecule type" value="Genomic_DNA"/>
</dbReference>
<dbReference type="SMR" id="Q1J7F8"/>
<dbReference type="KEGG" id="spi:MGAS10750_Spy0666"/>
<dbReference type="HOGENOM" id="CLU_084338_1_0_9"/>
<dbReference type="Proteomes" id="UP000002434">
    <property type="component" value="Chromosome"/>
</dbReference>
<dbReference type="GO" id="GO:0005886">
    <property type="term" value="C:plasma membrane"/>
    <property type="evidence" value="ECO:0007669"/>
    <property type="project" value="UniProtKB-SubCell"/>
</dbReference>
<dbReference type="GO" id="GO:0045259">
    <property type="term" value="C:proton-transporting ATP synthase complex"/>
    <property type="evidence" value="ECO:0007669"/>
    <property type="project" value="UniProtKB-KW"/>
</dbReference>
<dbReference type="GO" id="GO:0005524">
    <property type="term" value="F:ATP binding"/>
    <property type="evidence" value="ECO:0007669"/>
    <property type="project" value="UniProtKB-UniRule"/>
</dbReference>
<dbReference type="GO" id="GO:0046933">
    <property type="term" value="F:proton-transporting ATP synthase activity, rotational mechanism"/>
    <property type="evidence" value="ECO:0007669"/>
    <property type="project" value="UniProtKB-UniRule"/>
</dbReference>
<dbReference type="CDD" id="cd12152">
    <property type="entry name" value="F1-ATPase_delta"/>
    <property type="match status" value="1"/>
</dbReference>
<dbReference type="Gene3D" id="1.20.5.440">
    <property type="entry name" value="ATP synthase delta/epsilon subunit, C-terminal domain"/>
    <property type="match status" value="1"/>
</dbReference>
<dbReference type="Gene3D" id="2.60.15.10">
    <property type="entry name" value="F0F1 ATP synthase delta/epsilon subunit, N-terminal"/>
    <property type="match status" value="1"/>
</dbReference>
<dbReference type="HAMAP" id="MF_00530">
    <property type="entry name" value="ATP_synth_epsil_bac"/>
    <property type="match status" value="1"/>
</dbReference>
<dbReference type="InterPro" id="IPR001469">
    <property type="entry name" value="ATP_synth_F1_dsu/esu"/>
</dbReference>
<dbReference type="InterPro" id="IPR020546">
    <property type="entry name" value="ATP_synth_F1_dsu/esu_N"/>
</dbReference>
<dbReference type="InterPro" id="IPR020547">
    <property type="entry name" value="ATP_synth_F1_esu_C"/>
</dbReference>
<dbReference type="InterPro" id="IPR036771">
    <property type="entry name" value="ATPsynth_dsu/esu_N"/>
</dbReference>
<dbReference type="NCBIfam" id="TIGR01216">
    <property type="entry name" value="ATP_synt_epsi"/>
    <property type="match status" value="1"/>
</dbReference>
<dbReference type="NCBIfam" id="NF001846">
    <property type="entry name" value="PRK00571.1-3"/>
    <property type="match status" value="1"/>
</dbReference>
<dbReference type="PANTHER" id="PTHR13822">
    <property type="entry name" value="ATP SYNTHASE DELTA/EPSILON CHAIN"/>
    <property type="match status" value="1"/>
</dbReference>
<dbReference type="PANTHER" id="PTHR13822:SF10">
    <property type="entry name" value="ATP SYNTHASE EPSILON CHAIN, CHLOROPLASTIC"/>
    <property type="match status" value="1"/>
</dbReference>
<dbReference type="Pfam" id="PF00401">
    <property type="entry name" value="ATP-synt_DE"/>
    <property type="match status" value="1"/>
</dbReference>
<dbReference type="Pfam" id="PF02823">
    <property type="entry name" value="ATP-synt_DE_N"/>
    <property type="match status" value="1"/>
</dbReference>
<dbReference type="SUPFAM" id="SSF51344">
    <property type="entry name" value="Epsilon subunit of F1F0-ATP synthase N-terminal domain"/>
    <property type="match status" value="1"/>
</dbReference>
<accession>Q1J7F8</accession>
<keyword id="KW-0066">ATP synthesis</keyword>
<keyword id="KW-1003">Cell membrane</keyword>
<keyword id="KW-0139">CF(1)</keyword>
<keyword id="KW-0375">Hydrogen ion transport</keyword>
<keyword id="KW-0406">Ion transport</keyword>
<keyword id="KW-0472">Membrane</keyword>
<keyword id="KW-0813">Transport</keyword>